<evidence type="ECO:0000255" key="1">
    <source>
        <dbReference type="HAMAP-Rule" id="MF_01328"/>
    </source>
</evidence>
<evidence type="ECO:0000256" key="2">
    <source>
        <dbReference type="SAM" id="MobiDB-lite"/>
    </source>
</evidence>
<evidence type="ECO:0000305" key="3"/>
<protein>
    <recommendedName>
        <fullName evidence="1">Large ribosomal subunit protein uL4</fullName>
    </recommendedName>
    <alternativeName>
        <fullName evidence="3">50S ribosomal protein L4</fullName>
    </alternativeName>
</protein>
<accession>Q8CRG1</accession>
<gene>
    <name evidence="1" type="primary">rplD</name>
    <name type="ordered locus">SE_1823</name>
</gene>
<feature type="chain" id="PRO_0000129280" description="Large ribosomal subunit protein uL4">
    <location>
        <begin position="1"/>
        <end position="207"/>
    </location>
</feature>
<feature type="region of interest" description="Disordered" evidence="2">
    <location>
        <begin position="55"/>
        <end position="75"/>
    </location>
</feature>
<feature type="compositionally biased region" description="Basic residues" evidence="2">
    <location>
        <begin position="60"/>
        <end position="71"/>
    </location>
</feature>
<keyword id="KW-0687">Ribonucleoprotein</keyword>
<keyword id="KW-0689">Ribosomal protein</keyword>
<keyword id="KW-0694">RNA-binding</keyword>
<keyword id="KW-0699">rRNA-binding</keyword>
<name>RL4_STAES</name>
<sequence length="207" mass="22627">MANYDVLKVDGSKSGSVELNDAVFAIEPNNSVLFEAINLQRASLRQGTHAVKNRSAVRGGGRKPWRQKGTGRARQGTIRAPQWRGGGVVFGPTPRSYAYKMPKKMRRLALRSALSFKVQENSFTIVDTFGFEAPKTKEFKNVLTTLEQPKKVLVVTENEDVNVELSARNIPGVQVTTAQGLNVLDLTSADSVIITEAAAKKVEEVLA</sequence>
<organism>
    <name type="scientific">Staphylococcus epidermidis (strain ATCC 12228 / FDA PCI 1200)</name>
    <dbReference type="NCBI Taxonomy" id="176280"/>
    <lineage>
        <taxon>Bacteria</taxon>
        <taxon>Bacillati</taxon>
        <taxon>Bacillota</taxon>
        <taxon>Bacilli</taxon>
        <taxon>Bacillales</taxon>
        <taxon>Staphylococcaceae</taxon>
        <taxon>Staphylococcus</taxon>
    </lineage>
</organism>
<comment type="function">
    <text evidence="1">One of the primary rRNA binding proteins, this protein initially binds near the 5'-end of the 23S rRNA. It is important during the early stages of 50S assembly. It makes multiple contacts with different domains of the 23S rRNA in the assembled 50S subunit and ribosome.</text>
</comment>
<comment type="function">
    <text evidence="1">Forms part of the polypeptide exit tunnel.</text>
</comment>
<comment type="subunit">
    <text evidence="1">Part of the 50S ribosomal subunit.</text>
</comment>
<comment type="similarity">
    <text evidence="1">Belongs to the universal ribosomal protein uL4 family.</text>
</comment>
<reference key="1">
    <citation type="journal article" date="2003" name="Mol. Microbiol.">
        <title>Genome-based analysis of virulence genes in a non-biofilm-forming Staphylococcus epidermidis strain (ATCC 12228).</title>
        <authorList>
            <person name="Zhang Y.-Q."/>
            <person name="Ren S.-X."/>
            <person name="Li H.-L."/>
            <person name="Wang Y.-X."/>
            <person name="Fu G."/>
            <person name="Yang J."/>
            <person name="Qin Z.-Q."/>
            <person name="Miao Y.-G."/>
            <person name="Wang W.-Y."/>
            <person name="Chen R.-S."/>
            <person name="Shen Y."/>
            <person name="Chen Z."/>
            <person name="Yuan Z.-H."/>
            <person name="Zhao G.-P."/>
            <person name="Qu D."/>
            <person name="Danchin A."/>
            <person name="Wen Y.-M."/>
        </authorList>
    </citation>
    <scope>NUCLEOTIDE SEQUENCE [LARGE SCALE GENOMIC DNA]</scope>
    <source>
        <strain>ATCC 12228 / FDA PCI 1200</strain>
    </source>
</reference>
<dbReference type="EMBL" id="AE015929">
    <property type="protein sequence ID" value="AAO05464.1"/>
    <property type="molecule type" value="Genomic_DNA"/>
</dbReference>
<dbReference type="RefSeq" id="NP_765378.1">
    <property type="nucleotide sequence ID" value="NC_004461.1"/>
</dbReference>
<dbReference type="RefSeq" id="WP_001829775.1">
    <property type="nucleotide sequence ID" value="NZ_WBME01000007.1"/>
</dbReference>
<dbReference type="SMR" id="Q8CRG1"/>
<dbReference type="GeneID" id="50018074"/>
<dbReference type="KEGG" id="sep:SE_1823"/>
<dbReference type="PATRIC" id="fig|176280.10.peg.1779"/>
<dbReference type="eggNOG" id="COG0088">
    <property type="taxonomic scope" value="Bacteria"/>
</dbReference>
<dbReference type="HOGENOM" id="CLU_041575_5_2_9"/>
<dbReference type="OrthoDB" id="9803201at2"/>
<dbReference type="Proteomes" id="UP000001411">
    <property type="component" value="Chromosome"/>
</dbReference>
<dbReference type="GO" id="GO:1990904">
    <property type="term" value="C:ribonucleoprotein complex"/>
    <property type="evidence" value="ECO:0007669"/>
    <property type="project" value="UniProtKB-KW"/>
</dbReference>
<dbReference type="GO" id="GO:0005840">
    <property type="term" value="C:ribosome"/>
    <property type="evidence" value="ECO:0007669"/>
    <property type="project" value="UniProtKB-KW"/>
</dbReference>
<dbReference type="GO" id="GO:0019843">
    <property type="term" value="F:rRNA binding"/>
    <property type="evidence" value="ECO:0007669"/>
    <property type="project" value="UniProtKB-UniRule"/>
</dbReference>
<dbReference type="GO" id="GO:0003735">
    <property type="term" value="F:structural constituent of ribosome"/>
    <property type="evidence" value="ECO:0007669"/>
    <property type="project" value="InterPro"/>
</dbReference>
<dbReference type="GO" id="GO:0006412">
    <property type="term" value="P:translation"/>
    <property type="evidence" value="ECO:0007669"/>
    <property type="project" value="UniProtKB-UniRule"/>
</dbReference>
<dbReference type="FunFam" id="3.40.1370.10:FF:000003">
    <property type="entry name" value="50S ribosomal protein L4"/>
    <property type="match status" value="1"/>
</dbReference>
<dbReference type="Gene3D" id="3.40.1370.10">
    <property type="match status" value="1"/>
</dbReference>
<dbReference type="HAMAP" id="MF_01328_B">
    <property type="entry name" value="Ribosomal_uL4_B"/>
    <property type="match status" value="1"/>
</dbReference>
<dbReference type="InterPro" id="IPR002136">
    <property type="entry name" value="Ribosomal_uL4"/>
</dbReference>
<dbReference type="InterPro" id="IPR013005">
    <property type="entry name" value="Ribosomal_uL4-like"/>
</dbReference>
<dbReference type="InterPro" id="IPR023574">
    <property type="entry name" value="Ribosomal_uL4_dom_sf"/>
</dbReference>
<dbReference type="NCBIfam" id="TIGR03953">
    <property type="entry name" value="rplD_bact"/>
    <property type="match status" value="1"/>
</dbReference>
<dbReference type="PANTHER" id="PTHR10746">
    <property type="entry name" value="50S RIBOSOMAL PROTEIN L4"/>
    <property type="match status" value="1"/>
</dbReference>
<dbReference type="PANTHER" id="PTHR10746:SF6">
    <property type="entry name" value="LARGE RIBOSOMAL SUBUNIT PROTEIN UL4M"/>
    <property type="match status" value="1"/>
</dbReference>
<dbReference type="Pfam" id="PF00573">
    <property type="entry name" value="Ribosomal_L4"/>
    <property type="match status" value="1"/>
</dbReference>
<dbReference type="SUPFAM" id="SSF52166">
    <property type="entry name" value="Ribosomal protein L4"/>
    <property type="match status" value="1"/>
</dbReference>
<proteinExistence type="inferred from homology"/>